<evidence type="ECO:0000255" key="1"/>
<evidence type="ECO:0000269" key="2">
    <source>
    </source>
</evidence>
<evidence type="ECO:0000269" key="3">
    <source>
    </source>
</evidence>
<evidence type="ECO:0000269" key="4">
    <source>
    </source>
</evidence>
<evidence type="ECO:0000269" key="5">
    <source>
    </source>
</evidence>
<evidence type="ECO:0000305" key="6"/>
<evidence type="ECO:0000305" key="7">
    <source>
    </source>
</evidence>
<evidence type="ECO:0007829" key="8">
    <source>
        <dbReference type="PDB" id="1TIB"/>
    </source>
</evidence>
<evidence type="ECO:0007829" key="9">
    <source>
        <dbReference type="PDB" id="4GLB"/>
    </source>
</evidence>
<evidence type="ECO:0007829" key="10">
    <source>
        <dbReference type="PDB" id="6O8V"/>
    </source>
</evidence>
<evidence type="ECO:0007829" key="11">
    <source>
        <dbReference type="PDB" id="6OR3"/>
    </source>
</evidence>
<evidence type="ECO:0007829" key="12">
    <source>
        <dbReference type="PDB" id="6OSZ"/>
    </source>
</evidence>
<evidence type="ECO:0007829" key="13">
    <source>
        <dbReference type="PDB" id="7APP"/>
    </source>
</evidence>
<proteinExistence type="evidence at protein level"/>
<gene>
    <name type="primary">LIP</name>
</gene>
<reference key="1">
    <citation type="submission" date="1998-03" db="EMBL/GenBank/DDBJ databases">
        <title>Wild type Humicola lanuginosa cDNA encoding a lipolytic enzyme.</title>
        <authorList>
            <person name="Boel E."/>
            <person name="Muller S."/>
            <person name="Sandal T."/>
            <person name="Kamp-Hansen P."/>
            <person name="Dalboge H."/>
        </authorList>
    </citation>
    <scope>NUCLEOTIDE SEQUENCE [MRNA]</scope>
</reference>
<reference key="2">
    <citation type="journal article" date="1994" name="Lipids">
        <title>Trp89 in the lid of Humicola lanuginosa lipase is important for efficient hydrolysis of tributyrin.</title>
        <authorList>
            <person name="Holmquist M."/>
            <person name="Martinelle M."/>
            <person name="Clausen I.G."/>
            <person name="Patkar S.A."/>
            <person name="Svendsen A."/>
            <person name="Hult K."/>
        </authorList>
    </citation>
    <scope>MUTAGENESIS OF TRP-111</scope>
</reference>
<reference key="3">
    <citation type="journal article" date="1995" name="Scand. J. Immunol.">
        <title>The importance of non-charged amino acids in antibody binding to Humicola lanuginosa lipase.</title>
        <authorList>
            <person name="Naver H."/>
            <person name="Lovborg U."/>
        </authorList>
    </citation>
    <scope>MUTAGENESIS</scope>
</reference>
<reference key="4">
    <citation type="journal article" date="1996" name="Protein Eng.">
        <title>The role of Glu87 and Trp89 in the lid of Humicola lanuginosa lipase.</title>
        <authorList>
            <person name="Martinelle M."/>
            <person name="Holmquist M."/>
            <person name="Clausen I.G."/>
            <person name="Patkar S.A."/>
            <person name="Svendsen A."/>
            <person name="Hult K."/>
        </authorList>
    </citation>
    <scope>MUTAGENESIS OF GLU-109 AND TRP-111</scope>
</reference>
<reference key="5">
    <citation type="journal article" date="1998" name="Biochemistry">
        <title>Active serine involved in the stabilization of the active site loop in the Humicola lanuginosa lipase.</title>
        <authorList>
            <person name="Peters G.H."/>
            <person name="Svendsen A."/>
            <person name="Langberg H."/>
            <person name="Vind J."/>
            <person name="Patkar S.A."/>
            <person name="Toxvaerd S."/>
            <person name="Kinnunen P.K.J."/>
        </authorList>
    </citation>
    <scope>MUTAGENESIS OF SER-168</scope>
</reference>
<reference key="6">
    <citation type="journal article" date="1994" name="J. Lipid Res.">
        <title>Conformational lability of lipases observed in the absence of an oil-water interface: crystallographic studies of enzymes from the fungi Humicola lanuginosa and Rhizopus delemar.</title>
        <authorList>
            <person name="Derewenda U."/>
            <person name="Swenson L."/>
            <person name="Wei Y."/>
            <person name="Green R."/>
            <person name="Kobos P.M."/>
            <person name="Joerger R."/>
            <person name="Haas M.J."/>
            <person name="Derewenda Z.S."/>
        </authorList>
    </citation>
    <scope>X-RAY CRYSTALLOGRAPHY (1.84 ANGSTROMS)</scope>
    <scope>ACTIVE SITE</scope>
    <scope>DISULFIDE BONDS</scope>
</reference>
<reference key="7">
    <citation type="journal article" date="2000" name="Biochemistry">
        <title>Structural origins of the interfacial activation in Thermomyces (Humicola) lanuginosa lipase.</title>
        <authorList>
            <person name="Brzozowski A.M."/>
            <person name="Savage H."/>
            <person name="Verma C.S."/>
            <person name="Turkenburg J.P."/>
            <person name="Lawson D.M."/>
            <person name="Svendsen A."/>
            <person name="Patkar S.A."/>
        </authorList>
    </citation>
    <scope>X-RAY CRYSTALLOGRAPHY (2.6 ANGSTROMS) OF 23-291</scope>
    <scope>DISULFIDE BONDS</scope>
</reference>
<name>LIP_THELA</name>
<dbReference type="EC" id="3.1.1.3"/>
<dbReference type="EMBL" id="AF054513">
    <property type="protein sequence ID" value="AAC08588.1"/>
    <property type="molecule type" value="mRNA"/>
</dbReference>
<dbReference type="PDB" id="1DT3">
    <property type="method" value="X-ray"/>
    <property type="resolution" value="2.60 A"/>
    <property type="chains" value="A/B=23-291"/>
</dbReference>
<dbReference type="PDB" id="1DT5">
    <property type="method" value="X-ray"/>
    <property type="resolution" value="2.40 A"/>
    <property type="chains" value="A/B/C/D/E/F/G/H=23-291"/>
</dbReference>
<dbReference type="PDB" id="1DTE">
    <property type="method" value="X-ray"/>
    <property type="resolution" value="2.35 A"/>
    <property type="chains" value="A/B=23-291"/>
</dbReference>
<dbReference type="PDB" id="1DU4">
    <property type="method" value="X-ray"/>
    <property type="resolution" value="2.50 A"/>
    <property type="chains" value="A/B/C/D=23-291"/>
</dbReference>
<dbReference type="PDB" id="1EIN">
    <property type="method" value="X-ray"/>
    <property type="resolution" value="3.00 A"/>
    <property type="chains" value="A/B/C=23-291"/>
</dbReference>
<dbReference type="PDB" id="1GT6">
    <property type="method" value="X-ray"/>
    <property type="resolution" value="2.20 A"/>
    <property type="chains" value="A/B=23-291"/>
</dbReference>
<dbReference type="PDB" id="1TIB">
    <property type="method" value="X-ray"/>
    <property type="resolution" value="1.84 A"/>
    <property type="chains" value="A=23-291"/>
</dbReference>
<dbReference type="PDB" id="4DYH">
    <property type="method" value="X-ray"/>
    <property type="resolution" value="2.00 A"/>
    <property type="chains" value="A/B=23-291"/>
</dbReference>
<dbReference type="PDB" id="4EA6">
    <property type="method" value="X-ray"/>
    <property type="resolution" value="2.30 A"/>
    <property type="chains" value="A/B=23-291"/>
</dbReference>
<dbReference type="PDB" id="4FLF">
    <property type="method" value="X-ray"/>
    <property type="resolution" value="2.15 A"/>
    <property type="chains" value="A/B=23-291"/>
</dbReference>
<dbReference type="PDB" id="4GBG">
    <property type="method" value="X-ray"/>
    <property type="resolution" value="2.90 A"/>
    <property type="chains" value="A/B=23-291"/>
</dbReference>
<dbReference type="PDB" id="4GHW">
    <property type="method" value="X-ray"/>
    <property type="resolution" value="2.60 A"/>
    <property type="chains" value="A/B=23-291"/>
</dbReference>
<dbReference type="PDB" id="4GI1">
    <property type="method" value="X-ray"/>
    <property type="resolution" value="2.43 A"/>
    <property type="chains" value="A/B=23-291"/>
</dbReference>
<dbReference type="PDB" id="4GLB">
    <property type="method" value="X-ray"/>
    <property type="resolution" value="2.69 A"/>
    <property type="chains" value="A/B=23-291"/>
</dbReference>
<dbReference type="PDB" id="4GWL">
    <property type="method" value="X-ray"/>
    <property type="resolution" value="2.55 A"/>
    <property type="chains" value="A/B=23-291"/>
</dbReference>
<dbReference type="PDB" id="4KJX">
    <property type="method" value="X-ray"/>
    <property type="resolution" value="2.10 A"/>
    <property type="chains" value="A/B=23-291"/>
</dbReference>
<dbReference type="PDB" id="4N8S">
    <property type="method" value="X-ray"/>
    <property type="resolution" value="2.30 A"/>
    <property type="chains" value="A/B=23-291"/>
</dbReference>
<dbReference type="PDB" id="4S0X">
    <property type="method" value="X-ray"/>
    <property type="resolution" value="2.10 A"/>
    <property type="chains" value="A/B=23-291"/>
</dbReference>
<dbReference type="PDB" id="4ZGB">
    <property type="method" value="X-ray"/>
    <property type="resolution" value="2.30 A"/>
    <property type="chains" value="A/B=23-291"/>
</dbReference>
<dbReference type="PDB" id="5AP9">
    <property type="method" value="X-ray"/>
    <property type="resolution" value="1.80 A"/>
    <property type="chains" value="A/B=23-291"/>
</dbReference>
<dbReference type="PDB" id="6HW1">
    <property type="method" value="X-ray"/>
    <property type="resolution" value="2.50 A"/>
    <property type="chains" value="A/B=23-291"/>
</dbReference>
<dbReference type="PDB" id="6O8V">
    <property type="method" value="X-ray"/>
    <property type="resolution" value="1.30 A"/>
    <property type="chains" value="A=1-291"/>
</dbReference>
<dbReference type="PDB" id="6O9F">
    <property type="method" value="X-ray"/>
    <property type="resolution" value="2.48 A"/>
    <property type="chains" value="A/B/C/D/E/F=1-291"/>
</dbReference>
<dbReference type="PDB" id="6OR3">
    <property type="method" value="X-ray"/>
    <property type="resolution" value="1.45 A"/>
    <property type="chains" value="A=1-291"/>
</dbReference>
<dbReference type="PDB" id="6OSZ">
    <property type="method" value="X-ray"/>
    <property type="resolution" value="1.43 A"/>
    <property type="chains" value="A/B/C/D/E/F=1-291"/>
</dbReference>
<dbReference type="PDB" id="6XOK">
    <property type="method" value="X-ray"/>
    <property type="resolution" value="1.30 A"/>
    <property type="chains" value="A=1-291"/>
</dbReference>
<dbReference type="PDB" id="6XRV">
    <property type="method" value="X-ray"/>
    <property type="resolution" value="1.43 A"/>
    <property type="chains" value="A/B/C/D/E/F=1-291"/>
</dbReference>
<dbReference type="PDB" id="6XS3">
    <property type="method" value="X-ray"/>
    <property type="resolution" value="2.48 A"/>
    <property type="chains" value="A/B/C/D/E/F=1-291"/>
</dbReference>
<dbReference type="PDB" id="7APN">
    <property type="method" value="X-ray"/>
    <property type="resolution" value="2.00 A"/>
    <property type="chains" value="A/B=23-291"/>
</dbReference>
<dbReference type="PDB" id="7APP">
    <property type="method" value="X-ray"/>
    <property type="resolution" value="1.70 A"/>
    <property type="chains" value="A/B=23-291"/>
</dbReference>
<dbReference type="PDBsum" id="1DT3"/>
<dbReference type="PDBsum" id="1DT5"/>
<dbReference type="PDBsum" id="1DTE"/>
<dbReference type="PDBsum" id="1DU4"/>
<dbReference type="PDBsum" id="1EIN"/>
<dbReference type="PDBsum" id="1GT6"/>
<dbReference type="PDBsum" id="1TIB"/>
<dbReference type="PDBsum" id="4DYH"/>
<dbReference type="PDBsum" id="4EA6"/>
<dbReference type="PDBsum" id="4FLF"/>
<dbReference type="PDBsum" id="4GBG"/>
<dbReference type="PDBsum" id="4GHW"/>
<dbReference type="PDBsum" id="4GI1"/>
<dbReference type="PDBsum" id="4GLB"/>
<dbReference type="PDBsum" id="4GWL"/>
<dbReference type="PDBsum" id="4KJX"/>
<dbReference type="PDBsum" id="4N8S"/>
<dbReference type="PDBsum" id="4S0X"/>
<dbReference type="PDBsum" id="4ZGB"/>
<dbReference type="PDBsum" id="5AP9"/>
<dbReference type="PDBsum" id="6HW1"/>
<dbReference type="PDBsum" id="6O8V"/>
<dbReference type="PDBsum" id="6O9F"/>
<dbReference type="PDBsum" id="6OR3"/>
<dbReference type="PDBsum" id="6OSZ"/>
<dbReference type="PDBsum" id="6XOK"/>
<dbReference type="PDBsum" id="6XRV"/>
<dbReference type="PDBsum" id="6XS3"/>
<dbReference type="PDBsum" id="7APN"/>
<dbReference type="PDBsum" id="7APP"/>
<dbReference type="SMR" id="O59952"/>
<dbReference type="ChEMBL" id="CHEMBL2021756"/>
<dbReference type="Allergome" id="904">
    <property type="allergen name" value="The l Lipase"/>
</dbReference>
<dbReference type="ESTHER" id="humla-1lipa">
    <property type="family name" value="Lipase_3"/>
</dbReference>
<dbReference type="BRENDA" id="3.1.1.3">
    <property type="organism ID" value="2711"/>
</dbReference>
<dbReference type="SABIO-RK" id="O59952"/>
<dbReference type="EvolutionaryTrace" id="O59952"/>
<dbReference type="GO" id="GO:0004806">
    <property type="term" value="F:triacylglycerol lipase activity"/>
    <property type="evidence" value="ECO:0007669"/>
    <property type="project" value="UniProtKB-EC"/>
</dbReference>
<dbReference type="GO" id="GO:0016042">
    <property type="term" value="P:lipid catabolic process"/>
    <property type="evidence" value="ECO:0007669"/>
    <property type="project" value="UniProtKB-KW"/>
</dbReference>
<dbReference type="CDD" id="cd00519">
    <property type="entry name" value="Lipase_3"/>
    <property type="match status" value="1"/>
</dbReference>
<dbReference type="Gene3D" id="3.40.50.1820">
    <property type="entry name" value="alpha/beta hydrolase"/>
    <property type="match status" value="1"/>
</dbReference>
<dbReference type="InterPro" id="IPR029058">
    <property type="entry name" value="AB_hydrolase_fold"/>
</dbReference>
<dbReference type="InterPro" id="IPR051299">
    <property type="entry name" value="AB_hydrolase_lip/est"/>
</dbReference>
<dbReference type="InterPro" id="IPR002921">
    <property type="entry name" value="Fungal_lipase-type"/>
</dbReference>
<dbReference type="InterPro" id="IPR005592">
    <property type="entry name" value="Mono/diacylglycerol_lipase_N"/>
</dbReference>
<dbReference type="PANTHER" id="PTHR46640:SF1">
    <property type="entry name" value="FUNGAL LIPASE-LIKE DOMAIN-CONTAINING PROTEIN-RELATED"/>
    <property type="match status" value="1"/>
</dbReference>
<dbReference type="PANTHER" id="PTHR46640">
    <property type="entry name" value="TRIACYLGLYCEROL LIPASE, PUTATIVE (AFU_ORTHOLOGUE AFUA_6G06510)-RELATED"/>
    <property type="match status" value="1"/>
</dbReference>
<dbReference type="Pfam" id="PF03893">
    <property type="entry name" value="Lipase3_N"/>
    <property type="match status" value="1"/>
</dbReference>
<dbReference type="Pfam" id="PF01764">
    <property type="entry name" value="Lipase_3"/>
    <property type="match status" value="1"/>
</dbReference>
<dbReference type="SUPFAM" id="SSF53474">
    <property type="entry name" value="alpha/beta-Hydrolases"/>
    <property type="match status" value="1"/>
</dbReference>
<dbReference type="PROSITE" id="PS00120">
    <property type="entry name" value="LIPASE_SER"/>
    <property type="match status" value="1"/>
</dbReference>
<organism>
    <name type="scientific">Thermomyces lanuginosus</name>
    <name type="common">Humicola lanuginosa</name>
    <dbReference type="NCBI Taxonomy" id="5541"/>
    <lineage>
        <taxon>Eukaryota</taxon>
        <taxon>Fungi</taxon>
        <taxon>Dikarya</taxon>
        <taxon>Ascomycota</taxon>
        <taxon>Pezizomycotina</taxon>
        <taxon>Eurotiomycetes</taxon>
        <taxon>Eurotiomycetidae</taxon>
        <taxon>Eurotiales</taxon>
        <taxon>Trichocomaceae</taxon>
        <taxon>Thermomyces</taxon>
    </lineage>
</organism>
<sequence>MRSSLVLFFVSAWTALASPIRREVSQDLFNQFNLFAQYSAAAYCGKNNDAPAGTNITCTGNACPEVEKADATFLYSFEDSGVGDVTGFLALDNTNKLIVLSFRGSRSIENWIGNLNFDLKEINDICSGCRGHDGFTSSWRSVADTLRQKVEDAVREHPDYRVVFTGHSLGGALATVAGADLRGNGYDIDVFSYGAPRVGNRAFAEFLTVQTGGTLYRITHTNDIVPRLPPREFGYSHSSPEYWIKSGTLVPVTRNDIVKIEGIDATGGNNQPNIPDIPAHLWYFGLIGTCL</sequence>
<accession>O59952</accession>
<comment type="catalytic activity">
    <reaction>
        <text>a triacylglycerol + H2O = a diacylglycerol + a fatty acid + H(+)</text>
        <dbReference type="Rhea" id="RHEA:12044"/>
        <dbReference type="ChEBI" id="CHEBI:15377"/>
        <dbReference type="ChEBI" id="CHEBI:15378"/>
        <dbReference type="ChEBI" id="CHEBI:17855"/>
        <dbReference type="ChEBI" id="CHEBI:18035"/>
        <dbReference type="ChEBI" id="CHEBI:28868"/>
        <dbReference type="EC" id="3.1.1.3"/>
    </reaction>
</comment>
<comment type="biophysicochemical properties">
    <phDependence>
        <text>Active at alkaline pHs (up to pH 12 approximately).</text>
    </phDependence>
    <temperatureDependence>
        <text>Active over a broad temperature range.</text>
    </temperatureDependence>
</comment>
<comment type="biotechnology">
    <text>Used as a detergent lipase. Sold under the name Lipolase by Novozymes. Engineered variants are sold under the names Lipolase Ultra and LipoPrime.</text>
</comment>
<comment type="similarity">
    <text evidence="6">Belongs to the AB hydrolase superfamily. Lipase family.</text>
</comment>
<keyword id="KW-0002">3D-structure</keyword>
<keyword id="KW-0165">Cleavage on pair of basic residues</keyword>
<keyword id="KW-1015">Disulfide bond</keyword>
<keyword id="KW-0378">Hydrolase</keyword>
<keyword id="KW-0442">Lipid degradation</keyword>
<keyword id="KW-0443">Lipid metabolism</keyword>
<keyword id="KW-0732">Signal</keyword>
<keyword id="KW-0865">Zymogen</keyword>
<feature type="signal peptide" evidence="1">
    <location>
        <begin position="1"/>
        <end position="17"/>
    </location>
</feature>
<feature type="propeptide" id="PRO_0000017737">
    <location>
        <begin position="18"/>
        <end position="22"/>
    </location>
</feature>
<feature type="chain" id="PRO_0000017738" description="Lipase">
    <location>
        <begin position="23"/>
        <end position="291"/>
    </location>
</feature>
<feature type="active site" description="Nucleophile" evidence="3">
    <location>
        <position position="168"/>
    </location>
</feature>
<feature type="active site" description="Charge relay system" evidence="7">
    <location>
        <position position="223"/>
    </location>
</feature>
<feature type="active site" description="Charge relay system" evidence="7">
    <location>
        <position position="280"/>
    </location>
</feature>
<feature type="disulfide bond" evidence="3">
    <location>
        <begin position="44"/>
        <end position="290"/>
    </location>
</feature>
<feature type="disulfide bond" evidence="3">
    <location>
        <begin position="58"/>
        <end position="63"/>
    </location>
</feature>
<feature type="disulfide bond" evidence="3">
    <location>
        <begin position="126"/>
        <end position="129"/>
    </location>
</feature>
<feature type="mutagenesis site" description="35-70% of wild-type activity." evidence="4">
    <original>E</original>
    <variation>A</variation>
    <location>
        <position position="109"/>
    </location>
</feature>
<feature type="mutagenesis site" description="Altered chain length specificity." evidence="2 4">
    <original>W</original>
    <variation>E</variation>
    <variation>F</variation>
    <variation>G</variation>
    <variation>L</variation>
    <location>
        <position position="111"/>
    </location>
</feature>
<feature type="mutagenesis site" description="Decrease in liposome binding." evidence="5">
    <original>S</original>
    <variation>A</variation>
    <location>
        <position position="168"/>
    </location>
</feature>
<feature type="helix" evidence="10">
    <location>
        <begin position="26"/>
        <end position="41"/>
    </location>
</feature>
<feature type="helix" evidence="10">
    <location>
        <begin position="45"/>
        <end position="47"/>
    </location>
</feature>
<feature type="strand" evidence="9">
    <location>
        <begin position="52"/>
        <end position="55"/>
    </location>
</feature>
<feature type="helix" evidence="8">
    <location>
        <begin position="59"/>
        <end position="61"/>
    </location>
</feature>
<feature type="helix" evidence="10">
    <location>
        <begin position="64"/>
        <end position="68"/>
    </location>
</feature>
<feature type="strand" evidence="10">
    <location>
        <begin position="71"/>
        <end position="80"/>
    </location>
</feature>
<feature type="turn" evidence="10">
    <location>
        <begin position="81"/>
        <end position="84"/>
    </location>
</feature>
<feature type="strand" evidence="10">
    <location>
        <begin position="85"/>
        <end position="92"/>
    </location>
</feature>
<feature type="turn" evidence="10">
    <location>
        <begin position="93"/>
        <end position="96"/>
    </location>
</feature>
<feature type="strand" evidence="10">
    <location>
        <begin position="97"/>
        <end position="102"/>
    </location>
</feature>
<feature type="helix" evidence="10">
    <location>
        <begin position="108"/>
        <end position="114"/>
    </location>
</feature>
<feature type="strand" evidence="10">
    <location>
        <begin position="119"/>
        <end position="121"/>
    </location>
</feature>
<feature type="turn" evidence="10">
    <location>
        <begin position="123"/>
        <end position="125"/>
    </location>
</feature>
<feature type="strand" evidence="10">
    <location>
        <begin position="130"/>
        <end position="132"/>
    </location>
</feature>
<feature type="helix" evidence="10">
    <location>
        <begin position="133"/>
        <end position="156"/>
    </location>
</feature>
<feature type="strand" evidence="10">
    <location>
        <begin position="160"/>
        <end position="167"/>
    </location>
</feature>
<feature type="helix" evidence="10">
    <location>
        <begin position="169"/>
        <end position="181"/>
    </location>
</feature>
<feature type="strand" evidence="10">
    <location>
        <begin position="184"/>
        <end position="186"/>
    </location>
</feature>
<feature type="strand" evidence="10">
    <location>
        <begin position="188"/>
        <end position="194"/>
    </location>
</feature>
<feature type="helix" evidence="10">
    <location>
        <begin position="201"/>
        <end position="209"/>
    </location>
</feature>
<feature type="strand" evidence="11">
    <location>
        <begin position="211"/>
        <end position="213"/>
    </location>
</feature>
<feature type="strand" evidence="10">
    <location>
        <begin position="215"/>
        <end position="220"/>
    </location>
</feature>
<feature type="helix" evidence="10">
    <location>
        <begin position="225"/>
        <end position="227"/>
    </location>
</feature>
<feature type="helix" evidence="10">
    <location>
        <begin position="231"/>
        <end position="233"/>
    </location>
</feature>
<feature type="strand" evidence="10">
    <location>
        <begin position="241"/>
        <end position="244"/>
    </location>
</feature>
<feature type="helix" evidence="10">
    <location>
        <begin position="254"/>
        <end position="256"/>
    </location>
</feature>
<feature type="strand" evidence="10">
    <location>
        <begin position="257"/>
        <end position="260"/>
    </location>
</feature>
<feature type="strand" evidence="12">
    <location>
        <begin position="267"/>
        <end position="269"/>
    </location>
</feature>
<feature type="strand" evidence="13">
    <location>
        <begin position="271"/>
        <end position="273"/>
    </location>
</feature>
<feature type="helix" evidence="10">
    <location>
        <begin position="277"/>
        <end position="281"/>
    </location>
</feature>
<feature type="strand" evidence="10">
    <location>
        <begin position="282"/>
        <end position="286"/>
    </location>
</feature>
<protein>
    <recommendedName>
        <fullName>Lipase</fullName>
        <ecNumber>3.1.1.3</ecNumber>
    </recommendedName>
    <alternativeName>
        <fullName>Triacylglycerol lipase</fullName>
    </alternativeName>
</protein>